<reference key="1">
    <citation type="journal article" date="2007" name="PLoS ONE">
        <title>Analysis of the neurotoxin complex genes in Clostridium botulinum A1-A4 and B1 strains: BoNT/A3, /Ba4 and /B1 clusters are located within plasmids.</title>
        <authorList>
            <person name="Smith T.J."/>
            <person name="Hill K.K."/>
            <person name="Foley B.T."/>
            <person name="Detter J.C."/>
            <person name="Munk A.C."/>
            <person name="Bruce D.C."/>
            <person name="Doggett N.A."/>
            <person name="Smith L.A."/>
            <person name="Marks J.D."/>
            <person name="Xie G."/>
            <person name="Brettin T.S."/>
        </authorList>
    </citation>
    <scope>NUCLEOTIDE SEQUENCE [LARGE SCALE GENOMIC DNA]</scope>
    <source>
        <strain>Okra / Type B1</strain>
    </source>
</reference>
<dbReference type="EC" id="3.1.-.-" evidence="1"/>
<dbReference type="EMBL" id="CP000939">
    <property type="protein sequence ID" value="ACA46416.1"/>
    <property type="molecule type" value="Genomic_DNA"/>
</dbReference>
<dbReference type="SMR" id="B1IJG5"/>
<dbReference type="KEGG" id="cbb:CLD_2003"/>
<dbReference type="HOGENOM" id="CLU_098240_2_0_9"/>
<dbReference type="Proteomes" id="UP000008541">
    <property type="component" value="Chromosome"/>
</dbReference>
<dbReference type="GO" id="GO:0005829">
    <property type="term" value="C:cytosol"/>
    <property type="evidence" value="ECO:0007669"/>
    <property type="project" value="TreeGrafter"/>
</dbReference>
<dbReference type="GO" id="GO:0004518">
    <property type="term" value="F:nuclease activity"/>
    <property type="evidence" value="ECO:0007669"/>
    <property type="project" value="UniProtKB-KW"/>
</dbReference>
<dbReference type="GO" id="GO:0000967">
    <property type="term" value="P:rRNA 5'-end processing"/>
    <property type="evidence" value="ECO:0007669"/>
    <property type="project" value="UniProtKB-UniRule"/>
</dbReference>
<dbReference type="CDD" id="cd16964">
    <property type="entry name" value="YqgF"/>
    <property type="match status" value="1"/>
</dbReference>
<dbReference type="FunFam" id="3.30.420.140:FF:000003">
    <property type="entry name" value="Putative pre-16S rRNA nuclease"/>
    <property type="match status" value="1"/>
</dbReference>
<dbReference type="Gene3D" id="3.30.420.140">
    <property type="entry name" value="YqgF/RNase H-like domain"/>
    <property type="match status" value="1"/>
</dbReference>
<dbReference type="HAMAP" id="MF_00651">
    <property type="entry name" value="Nuclease_YqgF"/>
    <property type="match status" value="1"/>
</dbReference>
<dbReference type="InterPro" id="IPR012337">
    <property type="entry name" value="RNaseH-like_sf"/>
</dbReference>
<dbReference type="InterPro" id="IPR005227">
    <property type="entry name" value="YqgF"/>
</dbReference>
<dbReference type="InterPro" id="IPR006641">
    <property type="entry name" value="YqgF/RNaseH-like_dom"/>
</dbReference>
<dbReference type="InterPro" id="IPR037027">
    <property type="entry name" value="YqgF/RNaseH-like_dom_sf"/>
</dbReference>
<dbReference type="NCBIfam" id="TIGR00250">
    <property type="entry name" value="RNAse_H_YqgF"/>
    <property type="match status" value="1"/>
</dbReference>
<dbReference type="PANTHER" id="PTHR33317">
    <property type="entry name" value="POLYNUCLEOTIDYL TRANSFERASE, RIBONUCLEASE H-LIKE SUPERFAMILY PROTEIN"/>
    <property type="match status" value="1"/>
</dbReference>
<dbReference type="PANTHER" id="PTHR33317:SF4">
    <property type="entry name" value="POLYNUCLEOTIDYL TRANSFERASE, RIBONUCLEASE H-LIKE SUPERFAMILY PROTEIN"/>
    <property type="match status" value="1"/>
</dbReference>
<dbReference type="Pfam" id="PF03652">
    <property type="entry name" value="RuvX"/>
    <property type="match status" value="1"/>
</dbReference>
<dbReference type="SMART" id="SM00732">
    <property type="entry name" value="YqgFc"/>
    <property type="match status" value="1"/>
</dbReference>
<dbReference type="SUPFAM" id="SSF53098">
    <property type="entry name" value="Ribonuclease H-like"/>
    <property type="match status" value="1"/>
</dbReference>
<organism>
    <name type="scientific">Clostridium botulinum (strain Okra / Type B1)</name>
    <dbReference type="NCBI Taxonomy" id="498213"/>
    <lineage>
        <taxon>Bacteria</taxon>
        <taxon>Bacillati</taxon>
        <taxon>Bacillota</taxon>
        <taxon>Clostridia</taxon>
        <taxon>Eubacteriales</taxon>
        <taxon>Clostridiaceae</taxon>
        <taxon>Clostridium</taxon>
    </lineage>
</organism>
<feature type="chain" id="PRO_1000131015" description="Putative pre-16S rRNA nuclease">
    <location>
        <begin position="1"/>
        <end position="137"/>
    </location>
</feature>
<name>YQGF_CLOBK</name>
<protein>
    <recommendedName>
        <fullName evidence="1">Putative pre-16S rRNA nuclease</fullName>
        <ecNumber evidence="1">3.1.-.-</ecNumber>
    </recommendedName>
</protein>
<gene>
    <name type="ordered locus">CLD_2003</name>
</gene>
<evidence type="ECO:0000255" key="1">
    <source>
        <dbReference type="HAMAP-Rule" id="MF_00651"/>
    </source>
</evidence>
<proteinExistence type="inferred from homology"/>
<accession>B1IJG5</accession>
<comment type="function">
    <text evidence="1">Could be a nuclease involved in processing of the 5'-end of pre-16S rRNA.</text>
</comment>
<comment type="subcellular location">
    <subcellularLocation>
        <location evidence="1">Cytoplasm</location>
    </subcellularLocation>
</comment>
<comment type="similarity">
    <text evidence="1">Belongs to the YqgF nuclease family.</text>
</comment>
<sequence length="137" mass="15361">MRILGLDIGDRTIGIAISDPLGFTAQGITTIRRKSEAYDLEEIKKICDKYEVDTIVSGLPKNMNGTLGPQSEKVLEFCDLIKEHLNIEIKMWDERLTTVAATRAMLEADLSRSKRKKIVDKVAATYILQGYLDSLSK</sequence>
<keyword id="KW-0963">Cytoplasm</keyword>
<keyword id="KW-0378">Hydrolase</keyword>
<keyword id="KW-0540">Nuclease</keyword>
<keyword id="KW-0690">Ribosome biogenesis</keyword>